<reference key="1">
    <citation type="journal article" date="2004" name="Nucleic Acids Res.">
        <title>The genome sequence of Bacillus cereus ATCC 10987 reveals metabolic adaptations and a large plasmid related to Bacillus anthracis pXO1.</title>
        <authorList>
            <person name="Rasko D.A."/>
            <person name="Ravel J."/>
            <person name="Oekstad O.A."/>
            <person name="Helgason E."/>
            <person name="Cer R.Z."/>
            <person name="Jiang L."/>
            <person name="Shores K.A."/>
            <person name="Fouts D.E."/>
            <person name="Tourasse N.J."/>
            <person name="Angiuoli S.V."/>
            <person name="Kolonay J.F."/>
            <person name="Nelson W.C."/>
            <person name="Kolstoe A.-B."/>
            <person name="Fraser C.M."/>
            <person name="Read T.D."/>
        </authorList>
    </citation>
    <scope>NUCLEOTIDE SEQUENCE [LARGE SCALE GENOMIC DNA]</scope>
    <source>
        <strain>ATCC 10987 / NRS 248</strain>
    </source>
</reference>
<feature type="chain" id="PRO_0000140920" description="Thymidylate synthase">
    <location>
        <begin position="1"/>
        <end position="318"/>
    </location>
</feature>
<feature type="active site" description="Nucleophile" evidence="1">
    <location>
        <position position="200"/>
    </location>
</feature>
<feature type="binding site" description="in other chain" evidence="1">
    <location>
        <position position="25"/>
    </location>
    <ligand>
        <name>dUMP</name>
        <dbReference type="ChEBI" id="CHEBI:246422"/>
        <note>ligand shared between dimeric partners</note>
    </ligand>
</feature>
<feature type="binding site" evidence="1">
    <location>
        <begin position="180"/>
        <end position="181"/>
    </location>
    <ligand>
        <name>dUMP</name>
        <dbReference type="ChEBI" id="CHEBI:246422"/>
        <note>ligand shared between dimeric partners</note>
    </ligand>
</feature>
<feature type="binding site" description="in other chain" evidence="1">
    <location>
        <begin position="220"/>
        <end position="223"/>
    </location>
    <ligand>
        <name>dUMP</name>
        <dbReference type="ChEBI" id="CHEBI:246422"/>
        <note>ligand shared between dimeric partners</note>
    </ligand>
</feature>
<feature type="binding site" evidence="1">
    <location>
        <position position="223"/>
    </location>
    <ligand>
        <name>(6R)-5,10-methylene-5,6,7,8-tetrahydrofolate</name>
        <dbReference type="ChEBI" id="CHEBI:15636"/>
    </ligand>
</feature>
<feature type="binding site" description="in other chain" evidence="1">
    <location>
        <position position="231"/>
    </location>
    <ligand>
        <name>dUMP</name>
        <dbReference type="ChEBI" id="CHEBI:246422"/>
        <note>ligand shared between dimeric partners</note>
    </ligand>
</feature>
<feature type="binding site" description="in other chain" evidence="1">
    <location>
        <begin position="261"/>
        <end position="263"/>
    </location>
    <ligand>
        <name>dUMP</name>
        <dbReference type="ChEBI" id="CHEBI:246422"/>
        <note>ligand shared between dimeric partners</note>
    </ligand>
</feature>
<feature type="binding site" evidence="1">
    <location>
        <position position="317"/>
    </location>
    <ligand>
        <name>(6R)-5,10-methylene-5,6,7,8-tetrahydrofolate</name>
        <dbReference type="ChEBI" id="CHEBI:15636"/>
    </ligand>
</feature>
<protein>
    <recommendedName>
        <fullName evidence="1">Thymidylate synthase</fullName>
        <shortName evidence="1">TS</shortName>
        <shortName evidence="1">TSase</shortName>
        <ecNumber evidence="1">2.1.1.45</ecNumber>
    </recommendedName>
</protein>
<comment type="function">
    <text evidence="1">Catalyzes the reductive methylation of 2'-deoxyuridine-5'-monophosphate (dUMP) to 2'-deoxythymidine-5'-monophosphate (dTMP) while utilizing 5,10-methylenetetrahydrofolate (mTHF) as the methyl donor and reductant in the reaction, yielding dihydrofolate (DHF) as a by-product. This enzymatic reaction provides an intracellular de novo source of dTMP, an essential precursor for DNA biosynthesis.</text>
</comment>
<comment type="catalytic activity">
    <reaction evidence="1">
        <text>dUMP + (6R)-5,10-methylene-5,6,7,8-tetrahydrofolate = 7,8-dihydrofolate + dTMP</text>
        <dbReference type="Rhea" id="RHEA:12104"/>
        <dbReference type="ChEBI" id="CHEBI:15636"/>
        <dbReference type="ChEBI" id="CHEBI:57451"/>
        <dbReference type="ChEBI" id="CHEBI:63528"/>
        <dbReference type="ChEBI" id="CHEBI:246422"/>
        <dbReference type="EC" id="2.1.1.45"/>
    </reaction>
</comment>
<comment type="pathway">
    <text evidence="1">Pyrimidine metabolism; dTTP biosynthesis.</text>
</comment>
<comment type="subunit">
    <text evidence="1">Homodimer.</text>
</comment>
<comment type="subcellular location">
    <subcellularLocation>
        <location evidence="1">Cytoplasm</location>
    </subcellularLocation>
</comment>
<comment type="similarity">
    <text evidence="1">Belongs to the thymidylate synthase family. Bacterial-type ThyA subfamily.</text>
</comment>
<proteinExistence type="inferred from homology"/>
<accession>Q738X7</accession>
<dbReference type="EC" id="2.1.1.45" evidence="1"/>
<dbReference type="EMBL" id="AE017194">
    <property type="protein sequence ID" value="AAS41185.1"/>
    <property type="molecule type" value="Genomic_DNA"/>
</dbReference>
<dbReference type="SMR" id="Q738X7"/>
<dbReference type="KEGG" id="bca:BCE_2266"/>
<dbReference type="HOGENOM" id="CLU_021669_0_2_9"/>
<dbReference type="UniPathway" id="UPA00575"/>
<dbReference type="Proteomes" id="UP000002527">
    <property type="component" value="Chromosome"/>
</dbReference>
<dbReference type="GO" id="GO:0005829">
    <property type="term" value="C:cytosol"/>
    <property type="evidence" value="ECO:0007669"/>
    <property type="project" value="TreeGrafter"/>
</dbReference>
<dbReference type="GO" id="GO:0004799">
    <property type="term" value="F:thymidylate synthase activity"/>
    <property type="evidence" value="ECO:0007669"/>
    <property type="project" value="UniProtKB-UniRule"/>
</dbReference>
<dbReference type="GO" id="GO:0006231">
    <property type="term" value="P:dTMP biosynthetic process"/>
    <property type="evidence" value="ECO:0007669"/>
    <property type="project" value="UniProtKB-UniRule"/>
</dbReference>
<dbReference type="GO" id="GO:0006235">
    <property type="term" value="P:dTTP biosynthetic process"/>
    <property type="evidence" value="ECO:0007669"/>
    <property type="project" value="UniProtKB-UniRule"/>
</dbReference>
<dbReference type="GO" id="GO:0032259">
    <property type="term" value="P:methylation"/>
    <property type="evidence" value="ECO:0007669"/>
    <property type="project" value="UniProtKB-KW"/>
</dbReference>
<dbReference type="CDD" id="cd00351">
    <property type="entry name" value="TS_Pyrimidine_HMase"/>
    <property type="match status" value="1"/>
</dbReference>
<dbReference type="Gene3D" id="3.30.572.10">
    <property type="entry name" value="Thymidylate synthase/dCMP hydroxymethylase domain"/>
    <property type="match status" value="1"/>
</dbReference>
<dbReference type="HAMAP" id="MF_00008">
    <property type="entry name" value="Thymidy_synth_bact"/>
    <property type="match status" value="1"/>
</dbReference>
<dbReference type="InterPro" id="IPR045097">
    <property type="entry name" value="Thymidate_synth/dCMP_Mease"/>
</dbReference>
<dbReference type="InterPro" id="IPR023451">
    <property type="entry name" value="Thymidate_synth/dCMP_Mease_dom"/>
</dbReference>
<dbReference type="InterPro" id="IPR036926">
    <property type="entry name" value="Thymidate_synth/dCMP_Mease_sf"/>
</dbReference>
<dbReference type="InterPro" id="IPR000398">
    <property type="entry name" value="Thymidylate_synthase"/>
</dbReference>
<dbReference type="InterPro" id="IPR020940">
    <property type="entry name" value="Thymidylate_synthase_AS"/>
</dbReference>
<dbReference type="NCBIfam" id="NF002496">
    <property type="entry name" value="PRK01827.1-2"/>
    <property type="match status" value="1"/>
</dbReference>
<dbReference type="NCBIfam" id="TIGR03284">
    <property type="entry name" value="thym_sym"/>
    <property type="match status" value="1"/>
</dbReference>
<dbReference type="PANTHER" id="PTHR11548:SF9">
    <property type="entry name" value="THYMIDYLATE SYNTHASE"/>
    <property type="match status" value="1"/>
</dbReference>
<dbReference type="PANTHER" id="PTHR11548">
    <property type="entry name" value="THYMIDYLATE SYNTHASE 1"/>
    <property type="match status" value="1"/>
</dbReference>
<dbReference type="Pfam" id="PF00303">
    <property type="entry name" value="Thymidylat_synt"/>
    <property type="match status" value="1"/>
</dbReference>
<dbReference type="PRINTS" id="PR00108">
    <property type="entry name" value="THYMDSNTHASE"/>
</dbReference>
<dbReference type="SUPFAM" id="SSF55831">
    <property type="entry name" value="Thymidylate synthase/dCMP hydroxymethylase"/>
    <property type="match status" value="1"/>
</dbReference>
<dbReference type="PROSITE" id="PS00091">
    <property type="entry name" value="THYMIDYLATE_SYNTHASE"/>
    <property type="match status" value="1"/>
</dbReference>
<keyword id="KW-0963">Cytoplasm</keyword>
<keyword id="KW-0489">Methyltransferase</keyword>
<keyword id="KW-0545">Nucleotide biosynthesis</keyword>
<keyword id="KW-0808">Transferase</keyword>
<gene>
    <name evidence="1" type="primary">thyA</name>
    <name type="ordered locus">BCE_2266</name>
</gene>
<evidence type="ECO:0000255" key="1">
    <source>
        <dbReference type="HAMAP-Rule" id="MF_00008"/>
    </source>
</evidence>
<name>TYSY_BACC1</name>
<sequence>MKHAENEYLNLCRHVMEHGTKKEDRTGTGTVSVFGYQMRFDLSKGFPLLTTKRVPFRLVASELLWFMKGDTNIRYLLQHNNNIWNEWAFKSWVESDEYTGPDMTDFGLRSQQDEEFKVQYDEQMELFKKNVLEDDDFSNKYGYLGDVYGKQWRAWKTTAGETLDQLKDVIEMIKKTPDSRRLIVSAWNPEDVPSMALPPCHTLFQFYVADGKLSCQLYQRSGDIFLGIPFNIASYSLLTHLIAHECGLEVGEFVHTIGDAHIYTNHFEQVEKQLAREPRPFPKLTLNPDVKSVFDFEMEDLTIEGYDPHPAIKAPVAV</sequence>
<organism>
    <name type="scientific">Bacillus cereus (strain ATCC 10987 / NRS 248)</name>
    <dbReference type="NCBI Taxonomy" id="222523"/>
    <lineage>
        <taxon>Bacteria</taxon>
        <taxon>Bacillati</taxon>
        <taxon>Bacillota</taxon>
        <taxon>Bacilli</taxon>
        <taxon>Bacillales</taxon>
        <taxon>Bacillaceae</taxon>
        <taxon>Bacillus</taxon>
        <taxon>Bacillus cereus group</taxon>
    </lineage>
</organism>